<proteinExistence type="evidence at protein level"/>
<gene>
    <name evidence="4" type="primary">NEC2</name>
</gene>
<protein>
    <recommendedName>
        <fullName evidence="4">Ferritin-like catalase Nec2</fullName>
        <ecNumber evidence="3">1.11.1.6</ecNumber>
    </recommendedName>
    <alternativeName>
        <fullName evidence="4">Nectar protein 2</fullName>
        <shortName evidence="4">NmNec2</shortName>
    </alternativeName>
</protein>
<dbReference type="EC" id="1.11.1.6" evidence="3"/>
<dbReference type="EMBL" id="OK664973">
    <property type="protein sequence ID" value="UIE54577.1"/>
    <property type="molecule type" value="mRNA"/>
</dbReference>
<dbReference type="GlyCosmos" id="P0DO51">
    <property type="glycosylation" value="3 sites, No reported glycans"/>
</dbReference>
<dbReference type="GO" id="GO:0004096">
    <property type="term" value="F:catalase activity"/>
    <property type="evidence" value="ECO:0000314"/>
    <property type="project" value="UniProtKB"/>
</dbReference>
<dbReference type="GO" id="GO:0042744">
    <property type="term" value="P:hydrogen peroxide catabolic process"/>
    <property type="evidence" value="ECO:0000314"/>
    <property type="project" value="UniProtKB"/>
</dbReference>
<dbReference type="InterPro" id="IPR052965">
    <property type="entry name" value="Pigment-catalase-like"/>
</dbReference>
<dbReference type="PANTHER" id="PTHR31694">
    <property type="entry name" value="DESICCATION-LIKE PROTEIN"/>
    <property type="match status" value="1"/>
</dbReference>
<dbReference type="PANTHER" id="PTHR31694:SF26">
    <property type="entry name" value="OS05G0151100 PROTEIN"/>
    <property type="match status" value="1"/>
</dbReference>
<dbReference type="Pfam" id="PF13668">
    <property type="entry name" value="Ferritin_2"/>
    <property type="match status" value="1"/>
</dbReference>
<name>NEC2_NESMA</name>
<keyword id="KW-0325">Glycoprotein</keyword>
<keyword id="KW-0560">Oxidoreductase</keyword>
<keyword id="KW-0732">Signal</keyword>
<accession>P0DO51</accession>
<sequence length="311" mass="34250">MAFLSNMAMFITMLMFSSMMHPCFSQPSCAPMDTMDTNGVDEADIDMMQFPINLEFLEAEFFLWGALGHGLDVVAPQLAMGGPPPYGAQKANLDPLTQNIITEFAYQEVGHLRALERTVGGFPRPLLNLSASNFANLIEAAFGYHLVPPFNPYRDGLSYMLASYAVPYMGLVGYVGTNPNLKGHQTKRLLAGLLGVESGQDAVIRMYLYERQGHVVAPYRHTVAEFTARISELRNRLAMCGVKDEGVIVPRQLGAENQTMSNVLSANYDSISYRRTPGEILRVVYSTGNESVPGGFYPNGGNGRIARRFLV</sequence>
<comment type="function">
    <text evidence="3">Involved in the production of blood-red nectar containing the alkaloid nesocodin and that serves as a visual attractant for pollinator visitation, including vertebrates such as Phelsuma geckos (PubMed:35074876). The nectar is initially acidic and pale yellow, but slowly becomes alkaline before turning into red within 24 hours (PubMed:35074876). Together with NEC1 and NEC3, facilitates the condensation of sinapaldehyde ((E)-3,5-dimethoxy-4-hydroxycinnamaldehyde) and proline to form nesocodin, a pigment with a stable imine bond (PubMed:35074876). Protects nesocodin from degradation by hydrogen peroxide H(2)O(2) by catalyzing the degradation of H(2)O(2) into water H(2)O and dioxygene O(2) (PubMed:35074876).</text>
</comment>
<comment type="catalytic activity">
    <reaction evidence="3">
        <text>2 H2O2 = O2 + 2 H2O</text>
        <dbReference type="Rhea" id="RHEA:20309"/>
        <dbReference type="ChEBI" id="CHEBI:15377"/>
        <dbReference type="ChEBI" id="CHEBI:15379"/>
        <dbReference type="ChEBI" id="CHEBI:16240"/>
        <dbReference type="EC" id="1.11.1.6"/>
    </reaction>
    <physiologicalReaction direction="left-to-right" evidence="3">
        <dbReference type="Rhea" id="RHEA:20310"/>
    </physiologicalReaction>
</comment>
<comment type="subunit">
    <text evidence="3">Forms homomultimers.</text>
</comment>
<comment type="tissue specificity">
    <text evidence="3">Observed in all flowers organs; mainly expressed in nectaries and, to a lower extent, in petals and ovules, as well as in stigmas and calyx at low levels.</text>
</comment>
<comment type="online information" name="Protein Spotlight">
    <link uri="https://www.proteinspotlight.org/back_issues/250/"/>
    <text>The colour red - Issue 250 of August 2022</text>
</comment>
<organism>
    <name type="scientific">Nesocodon mauritianus</name>
    <name type="common">Blue Mauritius bellflower</name>
    <name type="synonym">Wahlenbergia mauritiana</name>
    <dbReference type="NCBI Taxonomy" id="519296"/>
    <lineage>
        <taxon>Eukaryota</taxon>
        <taxon>Viridiplantae</taxon>
        <taxon>Streptophyta</taxon>
        <taxon>Embryophyta</taxon>
        <taxon>Tracheophyta</taxon>
        <taxon>Spermatophyta</taxon>
        <taxon>Magnoliopsida</taxon>
        <taxon>eudicotyledons</taxon>
        <taxon>Gunneridae</taxon>
        <taxon>Pentapetalae</taxon>
        <taxon>asterids</taxon>
        <taxon>campanulids</taxon>
        <taxon>Asterales</taxon>
        <taxon>Campanulaceae</taxon>
        <taxon>Nesocodon</taxon>
    </lineage>
</organism>
<feature type="signal peptide" evidence="1">
    <location>
        <begin position="1"/>
        <end position="25"/>
    </location>
</feature>
<feature type="chain" id="PRO_0000456306" description="Ferritin-like catalase Nec2">
    <location>
        <begin position="26"/>
        <end position="311"/>
    </location>
</feature>
<feature type="glycosylation site" description="N-linked (GlcNAc...) asparagine" evidence="2">
    <location>
        <position position="128"/>
    </location>
</feature>
<feature type="glycosylation site" description="N-linked (GlcNAc...) asparagine" evidence="2">
    <location>
        <position position="257"/>
    </location>
</feature>
<feature type="glycosylation site" description="N-linked (GlcNAc...) asparagine" evidence="2">
    <location>
        <position position="289"/>
    </location>
</feature>
<evidence type="ECO:0000255" key="1"/>
<evidence type="ECO:0000255" key="2">
    <source>
        <dbReference type="PROSITE-ProRule" id="PRU00498"/>
    </source>
</evidence>
<evidence type="ECO:0000269" key="3">
    <source>
    </source>
</evidence>
<evidence type="ECO:0000303" key="4">
    <source>
    </source>
</evidence>
<reference key="1">
    <citation type="journal article" date="2022" name="Proc. Natl. Acad. Sci. U.S.A.">
        <title>Convergent evolution of a blood-red nectar pigment in vertebrate-pollinated flowers.</title>
        <authorList>
            <person name="Roy R."/>
            <person name="Moreno N."/>
            <person name="Brockman S.A."/>
            <person name="Kostanecki A."/>
            <person name="Zambre A."/>
            <person name="Holl C."/>
            <person name="Solhaug E.M."/>
            <person name="Minami A."/>
            <person name="Snell-Rood E.C."/>
            <person name="Hampton M."/>
            <person name="Bee M.A."/>
            <person name="Chiari Y."/>
            <person name="Hegeman A.D."/>
            <person name="Carter C.J."/>
        </authorList>
    </citation>
    <scope>NUCLEOTIDE SEQUENCE [MRNA]</scope>
    <scope>FUNCTION</scope>
    <scope>CATALYTIC ACTIVITY</scope>
    <scope>TISSUE SPECIFICITY</scope>
    <scope>SUBUNIT</scope>
</reference>